<dbReference type="EC" id="4.1.1.50" evidence="4 6"/>
<dbReference type="EMBL" id="Y12500">
    <property type="protein sequence ID" value="CAA73102.1"/>
    <property type="molecule type" value="Genomic_DNA"/>
</dbReference>
<dbReference type="EMBL" id="Y12499">
    <property type="protein sequence ID" value="CAA73101.1"/>
    <property type="molecule type" value="mRNA"/>
</dbReference>
<dbReference type="EMBL" id="BX284601">
    <property type="protein sequence ID" value="CAB16315.1"/>
    <property type="molecule type" value="Genomic_DNA"/>
</dbReference>
<dbReference type="EMBL" id="AL023853">
    <property type="protein sequence ID" value="CAB16315.1"/>
    <property type="status" value="JOINED"/>
    <property type="molecule type" value="Genomic_DNA"/>
</dbReference>
<dbReference type="PIR" id="T22361">
    <property type="entry name" value="T22361"/>
</dbReference>
<dbReference type="RefSeq" id="NP_001379243.1">
    <property type="nucleotide sequence ID" value="NM_001392971.1"/>
</dbReference>
<dbReference type="RefSeq" id="NP_493448.1">
    <property type="nucleotide sequence ID" value="NM_061047.5"/>
</dbReference>
<dbReference type="SMR" id="O02655"/>
<dbReference type="BioGRID" id="38658">
    <property type="interactions" value="1"/>
</dbReference>
<dbReference type="FunCoup" id="O02655">
    <property type="interactions" value="1871"/>
</dbReference>
<dbReference type="IntAct" id="O02655">
    <property type="interactions" value="2"/>
</dbReference>
<dbReference type="STRING" id="6239.F47G4.7.1"/>
<dbReference type="PaxDb" id="6239-F47G4.7.1"/>
<dbReference type="PeptideAtlas" id="O02655"/>
<dbReference type="EnsemblMetazoa" id="F47G4.7.1">
    <property type="protein sequence ID" value="F47G4.7.1"/>
    <property type="gene ID" value="WBGene00004875"/>
</dbReference>
<dbReference type="EnsemblMetazoa" id="F47G4.7.2">
    <property type="protein sequence ID" value="F47G4.7.2"/>
    <property type="gene ID" value="WBGene00004875"/>
</dbReference>
<dbReference type="EnsemblMetazoa" id="F47G4.7.3">
    <property type="protein sequence ID" value="F47G4.7.3"/>
    <property type="gene ID" value="WBGene00004875"/>
</dbReference>
<dbReference type="GeneID" id="173269"/>
<dbReference type="UCSC" id="F47G4.7.1">
    <property type="organism name" value="c. elegans"/>
</dbReference>
<dbReference type="AGR" id="WB:WBGene00004875"/>
<dbReference type="WormBase" id="F47G4.7">
    <property type="protein sequence ID" value="CE18705"/>
    <property type="gene ID" value="WBGene00004875"/>
    <property type="gene designation" value="smd-1"/>
</dbReference>
<dbReference type="eggNOG" id="KOG0788">
    <property type="taxonomic scope" value="Eukaryota"/>
</dbReference>
<dbReference type="GeneTree" id="ENSGT00390000011776"/>
<dbReference type="HOGENOM" id="CLU_023050_1_0_1"/>
<dbReference type="InParanoid" id="O02655"/>
<dbReference type="OMA" id="WFEESSN"/>
<dbReference type="OrthoDB" id="1068353at2759"/>
<dbReference type="PhylomeDB" id="O02655"/>
<dbReference type="BRENDA" id="4.1.1.50">
    <property type="organism ID" value="1045"/>
</dbReference>
<dbReference type="Reactome" id="R-CEL-351202">
    <property type="pathway name" value="Metabolism of polyamines"/>
</dbReference>
<dbReference type="UniPathway" id="UPA00331">
    <property type="reaction ID" value="UER00451"/>
</dbReference>
<dbReference type="PRO" id="PR:O02655"/>
<dbReference type="Proteomes" id="UP000001940">
    <property type="component" value="Chromosome I"/>
</dbReference>
<dbReference type="Bgee" id="WBGene00004875">
    <property type="expression patterns" value="Expressed in larva and 3 other cell types or tissues"/>
</dbReference>
<dbReference type="GO" id="GO:0005829">
    <property type="term" value="C:cytosol"/>
    <property type="evidence" value="ECO:0000318"/>
    <property type="project" value="GO_Central"/>
</dbReference>
<dbReference type="GO" id="GO:0004014">
    <property type="term" value="F:adenosylmethionine decarboxylase activity"/>
    <property type="evidence" value="ECO:0000314"/>
    <property type="project" value="WormBase"/>
</dbReference>
<dbReference type="GO" id="GO:0008295">
    <property type="term" value="P:spermidine biosynthetic process"/>
    <property type="evidence" value="ECO:0000314"/>
    <property type="project" value="WormBase"/>
</dbReference>
<dbReference type="GO" id="GO:0006597">
    <property type="term" value="P:spermine biosynthetic process"/>
    <property type="evidence" value="ECO:0000314"/>
    <property type="project" value="WormBase"/>
</dbReference>
<dbReference type="FunFam" id="3.60.90.10:FF:000019">
    <property type="entry name" value="S-adenosylmethionine decarboxylase proenzyme"/>
    <property type="match status" value="1"/>
</dbReference>
<dbReference type="Gene3D" id="3.60.90.10">
    <property type="entry name" value="S-adenosylmethionine decarboxylase"/>
    <property type="match status" value="1"/>
</dbReference>
<dbReference type="InterPro" id="IPR048283">
    <property type="entry name" value="AdoMetDC-like"/>
</dbReference>
<dbReference type="InterPro" id="IPR001985">
    <property type="entry name" value="S-AdoMet_decarboxylase_euk"/>
</dbReference>
<dbReference type="InterPro" id="IPR016067">
    <property type="entry name" value="S-AdoMet_deCO2ase_core"/>
</dbReference>
<dbReference type="InterPro" id="IPR018166">
    <property type="entry name" value="S-AdoMet_deCO2ase_CS"/>
</dbReference>
<dbReference type="NCBIfam" id="TIGR00535">
    <property type="entry name" value="SAM_DCase"/>
    <property type="match status" value="1"/>
</dbReference>
<dbReference type="PANTHER" id="PTHR11570">
    <property type="entry name" value="S-ADENOSYLMETHIONINE DECARBOXYLASE"/>
    <property type="match status" value="1"/>
</dbReference>
<dbReference type="PANTHER" id="PTHR11570:SF0">
    <property type="entry name" value="S-ADENOSYLMETHIONINE DECARBOXYLASE PROENZYME"/>
    <property type="match status" value="1"/>
</dbReference>
<dbReference type="Pfam" id="PF01536">
    <property type="entry name" value="SAM_decarbox"/>
    <property type="match status" value="1"/>
</dbReference>
<dbReference type="PIRSF" id="PIRSF001355">
    <property type="entry name" value="S-AdenosylMet_decarboxylase"/>
    <property type="match status" value="1"/>
</dbReference>
<dbReference type="SUPFAM" id="SSF56276">
    <property type="entry name" value="S-adenosylmethionine decarboxylase"/>
    <property type="match status" value="1"/>
</dbReference>
<dbReference type="PROSITE" id="PS01336">
    <property type="entry name" value="ADOMETDC"/>
    <property type="match status" value="1"/>
</dbReference>
<accession>O02655</accession>
<name>DCAM_CAEEL</name>
<feature type="chain" id="PRO_0000029975" description="S-adenosylmethionine decarboxylase beta chain" evidence="1">
    <location>
        <begin position="1"/>
        <end position="82"/>
    </location>
</feature>
<feature type="chain" id="PRO_0000029976" description="S-adenosylmethionine decarboxylase alpha chain" evidence="1">
    <location>
        <begin position="83"/>
        <end position="368"/>
    </location>
</feature>
<feature type="active site" evidence="2">
    <location>
        <position position="26"/>
    </location>
</feature>
<feature type="active site" evidence="2">
    <location>
        <position position="29"/>
    </location>
</feature>
<feature type="active site" description="Schiff-base intermediate with substrate; via pyruvic acid" evidence="2">
    <location>
        <position position="83"/>
    </location>
</feature>
<feature type="active site" description="Proton donor; for catalytic activity" evidence="2">
    <location>
        <position position="97"/>
    </location>
</feature>
<feature type="active site" description="Proton acceptor; for processing activity" evidence="2">
    <location>
        <position position="246"/>
    </location>
</feature>
<feature type="active site" description="Proton acceptor; for processing activity" evidence="2">
    <location>
        <position position="261"/>
    </location>
</feature>
<feature type="site" description="Cleavage (non-hydrolytic); by autolysis" evidence="2">
    <location>
        <begin position="82"/>
        <end position="83"/>
    </location>
</feature>
<feature type="modified residue" description="Pyruvic acid (Ser); by autocatalysis" evidence="2">
    <location>
        <position position="83"/>
    </location>
</feature>
<protein>
    <recommendedName>
        <fullName>S-adenosylmethionine decarboxylase proenzyme</fullName>
        <shortName>AdoMetDC</shortName>
        <shortName>SAMDC</shortName>
        <ecNumber evidence="4 6">4.1.1.50</ecNumber>
    </recommendedName>
    <component>
        <recommendedName>
            <fullName>S-adenosylmethionine decarboxylase alpha chain</fullName>
        </recommendedName>
    </component>
    <component>
        <recommendedName>
            <fullName>S-adenosylmethionine decarboxylase beta chain</fullName>
        </recommendedName>
    </component>
</protein>
<keyword id="KW-0068">Autocatalytic cleavage</keyword>
<keyword id="KW-0210">Decarboxylase</keyword>
<keyword id="KW-0456">Lyase</keyword>
<keyword id="KW-0620">Polyamine biosynthesis</keyword>
<keyword id="KW-0670">Pyruvate</keyword>
<keyword id="KW-1185">Reference proteome</keyword>
<keyword id="KW-0949">S-adenosyl-L-methionine</keyword>
<keyword id="KW-0704">Schiff base</keyword>
<keyword id="KW-0745">Spermidine biosynthesis</keyword>
<keyword id="KW-0865">Zymogen</keyword>
<sequence length="368" mass="42143">MSATSATNFAVQTHPVKAPDEEYFFEGAEKLLELWFCSSTQNETRSLRIIPREEIDAMLDIARCKILHSKHNESIDSYVLSESSLFISDNRVILKTCGTTRLLAALPVIMQLAGAYAGLDQVQSVYYSRKNFLRPDLQPSLHKNFDAEVEYLDSFFVDGHAYCLGSLKQDRWYLYTFHREVEFPAHKQPDHTLEILMSDLDEEVLHKFTKDYAVDGNDCFMRAGIDKIIPAGADVHDELFDPCGYSMNAYMNDTDQYATIHVTPEKAFSFASFETNQDLVCLYSQTRKVLQCFRPNKILMTVFANDISEKGKDAQQQLWDRELPGYRRTNVQFVRLETETLVYAHFVRKASTGQDSSSSDEDDGERSD</sequence>
<evidence type="ECO:0000250" key="1"/>
<evidence type="ECO:0000250" key="2">
    <source>
        <dbReference type="UniProtKB" id="P17707"/>
    </source>
</evidence>
<evidence type="ECO:0000269" key="3">
    <source>
    </source>
</evidence>
<evidence type="ECO:0000269" key="4">
    <source>
    </source>
</evidence>
<evidence type="ECO:0000305" key="5"/>
<evidence type="ECO:0000305" key="6">
    <source>
    </source>
</evidence>
<evidence type="ECO:0000312" key="7">
    <source>
        <dbReference type="WormBase" id="F47G4.7"/>
    </source>
</evidence>
<organism>
    <name type="scientific">Caenorhabditis elegans</name>
    <dbReference type="NCBI Taxonomy" id="6239"/>
    <lineage>
        <taxon>Eukaryota</taxon>
        <taxon>Metazoa</taxon>
        <taxon>Ecdysozoa</taxon>
        <taxon>Nematoda</taxon>
        <taxon>Chromadorea</taxon>
        <taxon>Rhabditida</taxon>
        <taxon>Rhabditina</taxon>
        <taxon>Rhabditomorpha</taxon>
        <taxon>Rhabditoidea</taxon>
        <taxon>Rhabditidae</taxon>
        <taxon>Peloderinae</taxon>
        <taxon>Caenorhabditis</taxon>
    </lineage>
</organism>
<comment type="function">
    <text evidence="3">Essential for biosynthesis of the polyamines spermidine and spermine. Polyamines are essential for cell proliferation and are implicated in cellular processes, ranging from DNA replication to apoptosis.</text>
</comment>
<comment type="catalytic activity">
    <reaction evidence="4 6">
        <text>S-adenosyl-L-methionine + H(+) = S-adenosyl 3-(methylsulfanyl)propylamine + CO2</text>
        <dbReference type="Rhea" id="RHEA:15981"/>
        <dbReference type="ChEBI" id="CHEBI:15378"/>
        <dbReference type="ChEBI" id="CHEBI:16526"/>
        <dbReference type="ChEBI" id="CHEBI:57443"/>
        <dbReference type="ChEBI" id="CHEBI:59789"/>
        <dbReference type="EC" id="4.1.1.50"/>
    </reaction>
</comment>
<comment type="cofactor">
    <cofactor evidence="2">
        <name>pyruvate</name>
        <dbReference type="ChEBI" id="CHEBI:15361"/>
    </cofactor>
    <text evidence="2">Binds 1 pyruvoyl group covalently per subunit.</text>
</comment>
<comment type="pathway">
    <text evidence="4">Amine and polyamine biosynthesis; S-adenosylmethioninamine biosynthesis; S-adenosylmethioninamine from S-adenosyl-L-methionine: step 1/1.</text>
</comment>
<comment type="subunit">
    <text evidence="4">Heterotetramer of two alpha and two beta chains.</text>
</comment>
<comment type="PTM">
    <text evidence="2">Is synthesized initially as an inactive proenzyme. Formation of the active enzyme involves a self-maturation process in which the active site pyruvoyl group is generated from an internal serine residue via an autocatalytic post-translational modification. Two non-identical subunits are generated from the proenzyme in this reaction, and the pyruvate is formed at the N-terminus of the alpha chain, which is derived from the carboxyl end of the proenzyme. The post-translation cleavage follows an unusual pathway, termed non-hydrolytic serinolysis, in which the side chain hydroxyl group of the serine supplies its oxygen atom to form the C-terminus of the beta chain, while the remainder of the serine residue undergoes an oxidative deamination to produce ammonia and the pyruvoyl group blocking the N-terminus of the alpha chain.</text>
</comment>
<comment type="disruption phenotype">
    <text evidence="3">Reduced body size as compared to wild-type with the production of fewer progeny. Reduced spermidine levels, but increased putrescine accumulation. Double knockout with the polyamine transporter catp-5 results in a reduced brood size, delayed postembryonic development, and a more marked reduction in spermidine levels and a more marked increase in putrescine accumulation as compared to the single mutants.</text>
</comment>
<comment type="similarity">
    <text evidence="5">Belongs to the eukaryotic AdoMetDC family.</text>
</comment>
<gene>
    <name evidence="7" type="primary">smd-1</name>
    <name evidence="7" type="synonym">samdc</name>
    <name evidence="7" type="ORF">F47G4.7</name>
</gene>
<reference key="1">
    <citation type="journal article" date="1998" name="Biochem. J.">
        <title>Molecular and biochemical characterization of S-adenosylmethionine decarboxylase from the free-living nematode Caenorhabditis elegans.</title>
        <authorList>
            <person name="Da'dara A.A."/>
            <person name="Walter R.D."/>
        </authorList>
    </citation>
    <scope>NUCLEOTIDE SEQUENCE [GENOMIC DNA / MRNA]</scope>
    <scope>CATALYTIC ACTIVITY</scope>
    <scope>PATHWAY</scope>
    <scope>SUBUNIT</scope>
</reference>
<reference key="2">
    <citation type="journal article" date="1998" name="Science">
        <title>Genome sequence of the nematode C. elegans: a platform for investigating biology.</title>
        <authorList>
            <consortium name="The C. elegans sequencing consortium"/>
        </authorList>
    </citation>
    <scope>NUCLEOTIDE SEQUENCE [LARGE SCALE GENOMIC DNA]</scope>
    <source>
        <strain>Bristol N2</strain>
    </source>
</reference>
<reference key="3">
    <citation type="journal article" date="2010" name="FASEB J.">
        <title>Caenorhabditis elegans P5B-type ATPase CATP-5 operates in polyamine transport and is crucial for norspermidine-mediated suppression of RNA interference.</title>
        <authorList>
            <person name="Heinick A."/>
            <person name="Urban K."/>
            <person name="Roth S."/>
            <person name="Spies D."/>
            <person name="Nunes F."/>
            <person name="Phanstiel O. IV"/>
            <person name="Liebau E."/>
            <person name="Lueersen K."/>
        </authorList>
    </citation>
    <scope>FUNCTION</scope>
    <scope>CATALYTIC ACTIVITY</scope>
    <scope>DISRUPTION PHENOTYPE</scope>
</reference>
<proteinExistence type="evidence at protein level"/>